<reference key="1">
    <citation type="journal article" date="2002" name="Proc. Natl. Acad. Sci. U.S.A.">
        <title>The genome sequence of the facultative intracellular pathogen Brucella melitensis.</title>
        <authorList>
            <person name="DelVecchio V.G."/>
            <person name="Kapatral V."/>
            <person name="Redkar R.J."/>
            <person name="Patra G."/>
            <person name="Mujer C."/>
            <person name="Los T."/>
            <person name="Ivanova N."/>
            <person name="Anderson I."/>
            <person name="Bhattacharyya A."/>
            <person name="Lykidis A."/>
            <person name="Reznik G."/>
            <person name="Jablonski L."/>
            <person name="Larsen N."/>
            <person name="D'Souza M."/>
            <person name="Bernal A."/>
            <person name="Mazur M."/>
            <person name="Goltsman E."/>
            <person name="Selkov E."/>
            <person name="Elzer P.H."/>
            <person name="Hagius S."/>
            <person name="O'Callaghan D."/>
            <person name="Letesson J.-J."/>
            <person name="Haselkorn R."/>
            <person name="Kyrpides N.C."/>
            <person name="Overbeek R."/>
        </authorList>
    </citation>
    <scope>NUCLEOTIDE SEQUENCE [LARGE SCALE GENOMIC DNA]</scope>
    <source>
        <strain>ATCC 23456 / CCUG 17765 / NCTC 10094 / 16M</strain>
    </source>
</reference>
<gene>
    <name type="primary">pdhS</name>
    <name type="ordered locus">BMEI0417</name>
</gene>
<organism>
    <name type="scientific">Brucella melitensis biotype 1 (strain ATCC 23456 / CCUG 17765 / NCTC 10094 / 16M)</name>
    <dbReference type="NCBI Taxonomy" id="224914"/>
    <lineage>
        <taxon>Bacteria</taxon>
        <taxon>Pseudomonadati</taxon>
        <taxon>Pseudomonadota</taxon>
        <taxon>Alphaproteobacteria</taxon>
        <taxon>Hyphomicrobiales</taxon>
        <taxon>Brucellaceae</taxon>
        <taxon>Brucella/Ochrobactrum group</taxon>
        <taxon>Brucella</taxon>
    </lineage>
</organism>
<keyword id="KW-0067">ATP-binding</keyword>
<keyword id="KW-0131">Cell cycle</keyword>
<keyword id="KW-0132">Cell division</keyword>
<keyword id="KW-0963">Cytoplasm</keyword>
<keyword id="KW-0418">Kinase</keyword>
<keyword id="KW-0547">Nucleotide-binding</keyword>
<keyword id="KW-0597">Phosphoprotein</keyword>
<keyword id="KW-0808">Transferase</keyword>
<evidence type="ECO:0000250" key="1"/>
<evidence type="ECO:0000255" key="2">
    <source>
        <dbReference type="PROSITE-ProRule" id="PRU00107"/>
    </source>
</evidence>
<evidence type="ECO:0000255" key="3">
    <source>
        <dbReference type="PROSITE-ProRule" id="PRU00140"/>
    </source>
</evidence>
<evidence type="ECO:0000256" key="4">
    <source>
        <dbReference type="SAM" id="MobiDB-lite"/>
    </source>
</evidence>
<evidence type="ECO:0000305" key="5"/>
<sequence>MSGSYPFIDIAALDSVREGFARGDAQLVLAHDLSTVLWVNGPGAKLFGYNRVEDLIEGQLDLPVATRRQIAAFSSENTSAPSAVAVRLGGGLRSELTHLHVSNIKLPDGVAALLVATQMPDNSAEAAISGLGDDSTHIALVDAVGKVVAASPRFALLDISASTLEDLIVEAGDATDRIVKRRIRTGSHSVPGAIARLTDTPALHLLCIVGDAPAQFQTAAEAVPLPDNAEAVLEEILPEQGDAPAQQAQKTHAEQPRPKTFAFDHDAPPARFIWKVGPDGTFSEISPDLAAVVGPNSADIVGRRFSDVANVFGFDTDGSIAALLLERDTWSGKRLLWPVEGTRLRVPVELAALPVYSRDREFLGFRGFGIVRPAEAEADPEEIGLALAGGIPQNRKPRKEPAETARMVGEDDVLALSEEVANDDHPAAVLPKPPLDITPTPGRRDSDKVISLLNSCAQEKVAANQAKFLKEKERATRPEGGLTKTERNAFREIAERLRKQGLANTRAESETPVSETSSIEPVEPTPPVKTRSEPIQPDETALLANLPVPVIIHSGDAIHYVNQALLDITGYESLDDIRSAGGVDVLFNSESDDGETRQSMVLRHADGSEEPVDAHLNAIAWRGGRALMLSLMPVTAADLPAPAELPAANDEEKQALEAHVEELKTILDTATDGVVLIDPEGRIRSMNHSASALFGYERDEAEGKFFSMLFAIESQRAAMDYLHGLSGNGVLSVLNDGREVIGREAKGGFIPLFMTIGKLPHTRGFCAVLRDITQWKRTEEELTNARKEAERASNQKTEFLARISHEIRTPLNAIIGFSELMADEKFGPIGNDRYRDYLRDINRSGNHVLALVNDLLDISKIEAGALDMQFEAVSLNDAIGEAIALMQPQANRERVIIRSSFQSNLPDIVADSRSIKQVALNLLSNAVRFTAPGGQVIVSTSYELNGDVVMRVRDTGIGMSKSEVEQALKPFRQINALERRKAESAKDWRNEGTGLGLPLTKAMVEANRAQFAIDSNPGQGTVVEIVFPPTRVLAD</sequence>
<proteinExistence type="inferred from homology"/>
<name>PDHS_BRUME</name>
<comment type="function">
    <text evidence="1">Functions as a polar differentiation marker. Essential protein that, by localizing in the old pole of dividing cells, controls cell division and maturation, probably through control of DivK phosphorylation status and cellular distribution, which in turn regulates CtrA, a transcriptional regulator of the minB operon. The asymmetrical localization of this protein is probably required for cells to enter a new division cycle (By similarity).</text>
</comment>
<comment type="catalytic activity">
    <reaction>
        <text>ATP + protein L-histidine = ADP + protein N-phospho-L-histidine.</text>
        <dbReference type="EC" id="2.7.13.3"/>
    </reaction>
</comment>
<comment type="subunit">
    <text evidence="1">Interacts with DivK.</text>
</comment>
<comment type="subcellular location">
    <subcellularLocation>
        <location evidence="1">Cytoplasm</location>
    </subcellularLocation>
    <text evidence="1">Localizes at the old pole of dividing cells. Colocalizes with DivK (By similarity).</text>
</comment>
<comment type="sequence caution" evidence="5">
    <conflict type="erroneous initiation">
        <sequence resource="EMBL-CDS" id="AAL51598"/>
    </conflict>
</comment>
<protein>
    <recommendedName>
        <fullName>Cell-division control histidine kinase PdhS</fullName>
        <ecNumber>2.7.13.3</ecNumber>
    </recommendedName>
</protein>
<feature type="chain" id="PRO_0000361902" description="Cell-division control histidine kinase PdhS">
    <location>
        <begin position="1"/>
        <end position="1035"/>
    </location>
</feature>
<feature type="domain" description="PAS" evidence="3">
    <location>
        <begin position="659"/>
        <end position="730"/>
    </location>
</feature>
<feature type="domain" description="Histidine kinase" evidence="2">
    <location>
        <begin position="802"/>
        <end position="1031"/>
    </location>
</feature>
<feature type="region of interest" description="Important for polar localization" evidence="1">
    <location>
        <begin position="1"/>
        <end position="613"/>
    </location>
</feature>
<feature type="region of interest" description="Disordered" evidence="4">
    <location>
        <begin position="500"/>
        <end position="533"/>
    </location>
</feature>
<feature type="region of interest" description="Interaction with DivK" evidence="1">
    <location>
        <begin position="614"/>
        <end position="1035"/>
    </location>
</feature>
<feature type="modified residue" description="Phosphohistidine; by autocatalysis" evidence="2">
    <location>
        <position position="805"/>
    </location>
</feature>
<dbReference type="EC" id="2.7.13.3"/>
<dbReference type="EMBL" id="AE008917">
    <property type="protein sequence ID" value="AAL51598.1"/>
    <property type="status" value="ALT_INIT"/>
    <property type="molecule type" value="Genomic_DNA"/>
</dbReference>
<dbReference type="PIR" id="AC3304">
    <property type="entry name" value="AC3304"/>
</dbReference>
<dbReference type="RefSeq" id="WP_004684102.1">
    <property type="nucleotide sequence ID" value="NZ_GG703780.1"/>
</dbReference>
<dbReference type="SMR" id="Q8YIM6"/>
<dbReference type="GeneID" id="29593193"/>
<dbReference type="KEGG" id="bme:BMEI0417"/>
<dbReference type="KEGG" id="bmel:DK63_1006"/>
<dbReference type="PATRIC" id="fig|224914.52.peg.1063"/>
<dbReference type="eggNOG" id="COG2205">
    <property type="taxonomic scope" value="Bacteria"/>
</dbReference>
<dbReference type="PhylomeDB" id="Q8YIM6"/>
<dbReference type="Proteomes" id="UP000000419">
    <property type="component" value="Chromosome I"/>
</dbReference>
<dbReference type="GO" id="GO:0005737">
    <property type="term" value="C:cytoplasm"/>
    <property type="evidence" value="ECO:0007669"/>
    <property type="project" value="UniProtKB-SubCell"/>
</dbReference>
<dbReference type="GO" id="GO:0005886">
    <property type="term" value="C:plasma membrane"/>
    <property type="evidence" value="ECO:0007669"/>
    <property type="project" value="TreeGrafter"/>
</dbReference>
<dbReference type="GO" id="GO:0005524">
    <property type="term" value="F:ATP binding"/>
    <property type="evidence" value="ECO:0007669"/>
    <property type="project" value="UniProtKB-KW"/>
</dbReference>
<dbReference type="GO" id="GO:0009927">
    <property type="term" value="F:histidine phosphotransfer kinase activity"/>
    <property type="evidence" value="ECO:0007669"/>
    <property type="project" value="TreeGrafter"/>
</dbReference>
<dbReference type="GO" id="GO:0000155">
    <property type="term" value="F:phosphorelay sensor kinase activity"/>
    <property type="evidence" value="ECO:0007669"/>
    <property type="project" value="InterPro"/>
</dbReference>
<dbReference type="GO" id="GO:0051301">
    <property type="term" value="P:cell division"/>
    <property type="evidence" value="ECO:0007669"/>
    <property type="project" value="UniProtKB-KW"/>
</dbReference>
<dbReference type="GO" id="GO:0006355">
    <property type="term" value="P:regulation of DNA-templated transcription"/>
    <property type="evidence" value="ECO:0007669"/>
    <property type="project" value="InterPro"/>
</dbReference>
<dbReference type="CDD" id="cd00082">
    <property type="entry name" value="HisKA"/>
    <property type="match status" value="1"/>
</dbReference>
<dbReference type="CDD" id="cd00130">
    <property type="entry name" value="PAS"/>
    <property type="match status" value="1"/>
</dbReference>
<dbReference type="Gene3D" id="1.10.287.130">
    <property type="match status" value="1"/>
</dbReference>
<dbReference type="Gene3D" id="3.30.565.10">
    <property type="entry name" value="Histidine kinase-like ATPase, C-terminal domain"/>
    <property type="match status" value="1"/>
</dbReference>
<dbReference type="Gene3D" id="3.30.450.20">
    <property type="entry name" value="PAS domain"/>
    <property type="match status" value="1"/>
</dbReference>
<dbReference type="InterPro" id="IPR036890">
    <property type="entry name" value="HATPase_C_sf"/>
</dbReference>
<dbReference type="InterPro" id="IPR005467">
    <property type="entry name" value="His_kinase_dom"/>
</dbReference>
<dbReference type="InterPro" id="IPR003661">
    <property type="entry name" value="HisK_dim/P_dom"/>
</dbReference>
<dbReference type="InterPro" id="IPR036097">
    <property type="entry name" value="HisK_dim/P_sf"/>
</dbReference>
<dbReference type="InterPro" id="IPR000014">
    <property type="entry name" value="PAS"/>
</dbReference>
<dbReference type="InterPro" id="IPR035965">
    <property type="entry name" value="PAS-like_dom_sf"/>
</dbReference>
<dbReference type="InterPro" id="IPR013767">
    <property type="entry name" value="PAS_fold"/>
</dbReference>
<dbReference type="InterPro" id="IPR048231">
    <property type="entry name" value="PdhS_histid_kinase"/>
</dbReference>
<dbReference type="InterPro" id="IPR004358">
    <property type="entry name" value="Sig_transdc_His_kin-like_C"/>
</dbReference>
<dbReference type="NCBIfam" id="NF041593">
    <property type="entry name" value="histid_kinase_PdhS"/>
    <property type="match status" value="1"/>
</dbReference>
<dbReference type="NCBIfam" id="TIGR00229">
    <property type="entry name" value="sensory_box"/>
    <property type="match status" value="1"/>
</dbReference>
<dbReference type="PANTHER" id="PTHR43047:SF72">
    <property type="entry name" value="OSMOSENSING HISTIDINE PROTEIN KINASE SLN1"/>
    <property type="match status" value="1"/>
</dbReference>
<dbReference type="PANTHER" id="PTHR43047">
    <property type="entry name" value="TWO-COMPONENT HISTIDINE PROTEIN KINASE"/>
    <property type="match status" value="1"/>
</dbReference>
<dbReference type="Pfam" id="PF02518">
    <property type="entry name" value="HATPase_c"/>
    <property type="match status" value="1"/>
</dbReference>
<dbReference type="Pfam" id="PF00512">
    <property type="entry name" value="HisKA"/>
    <property type="match status" value="1"/>
</dbReference>
<dbReference type="Pfam" id="PF00989">
    <property type="entry name" value="PAS"/>
    <property type="match status" value="1"/>
</dbReference>
<dbReference type="Pfam" id="PF13188">
    <property type="entry name" value="PAS_8"/>
    <property type="match status" value="1"/>
</dbReference>
<dbReference type="PRINTS" id="PR00344">
    <property type="entry name" value="BCTRLSENSOR"/>
</dbReference>
<dbReference type="SMART" id="SM00387">
    <property type="entry name" value="HATPase_c"/>
    <property type="match status" value="1"/>
</dbReference>
<dbReference type="SMART" id="SM00388">
    <property type="entry name" value="HisKA"/>
    <property type="match status" value="1"/>
</dbReference>
<dbReference type="SMART" id="SM00091">
    <property type="entry name" value="PAS"/>
    <property type="match status" value="2"/>
</dbReference>
<dbReference type="SUPFAM" id="SSF55874">
    <property type="entry name" value="ATPase domain of HSP90 chaperone/DNA topoisomerase II/histidine kinase"/>
    <property type="match status" value="1"/>
</dbReference>
<dbReference type="SUPFAM" id="SSF47384">
    <property type="entry name" value="Homodimeric domain of signal transducing histidine kinase"/>
    <property type="match status" value="1"/>
</dbReference>
<dbReference type="SUPFAM" id="SSF55785">
    <property type="entry name" value="PYP-like sensor domain (PAS domain)"/>
    <property type="match status" value="1"/>
</dbReference>
<dbReference type="PROSITE" id="PS50109">
    <property type="entry name" value="HIS_KIN"/>
    <property type="match status" value="1"/>
</dbReference>
<dbReference type="PROSITE" id="PS50112">
    <property type="entry name" value="PAS"/>
    <property type="match status" value="1"/>
</dbReference>
<accession>Q8YIM6</accession>